<accession>P85472</accession>
<keyword id="KW-0027">Amidation</keyword>
<keyword id="KW-0903">Direct protein sequencing</keyword>
<keyword id="KW-0527">Neuropeptide</keyword>
<keyword id="KW-0964">Secreted</keyword>
<comment type="subcellular location">
    <subcellularLocation>
        <location evidence="4">Secreted</location>
    </subcellularLocation>
</comment>
<comment type="mass spectrometry" mass="929.43" method="MALDI" evidence="2"/>
<comment type="similarity">
    <text evidence="1">Belongs to the FARP (FMRFamide related peptide) family.</text>
</comment>
<proteinExistence type="evidence at protein level"/>
<name>FAR13_SARBU</name>
<dbReference type="GO" id="GO:0005576">
    <property type="term" value="C:extracellular region"/>
    <property type="evidence" value="ECO:0007669"/>
    <property type="project" value="UniProtKB-SubCell"/>
</dbReference>
<dbReference type="GO" id="GO:0007218">
    <property type="term" value="P:neuropeptide signaling pathway"/>
    <property type="evidence" value="ECO:0007669"/>
    <property type="project" value="UniProtKB-KW"/>
</dbReference>
<evidence type="ECO:0000255" key="1"/>
<evidence type="ECO:0000269" key="2">
    <source>
    </source>
</evidence>
<evidence type="ECO:0000303" key="3">
    <source>
    </source>
</evidence>
<evidence type="ECO:0000305" key="4"/>
<organism>
    <name type="scientific">Sarcophaga bullata</name>
    <name type="common">Grey flesh fly</name>
    <name type="synonym">Neobellieria bullata</name>
    <dbReference type="NCBI Taxonomy" id="7385"/>
    <lineage>
        <taxon>Eukaryota</taxon>
        <taxon>Metazoa</taxon>
        <taxon>Ecdysozoa</taxon>
        <taxon>Arthropoda</taxon>
        <taxon>Hexapoda</taxon>
        <taxon>Insecta</taxon>
        <taxon>Pterygota</taxon>
        <taxon>Neoptera</taxon>
        <taxon>Endopterygota</taxon>
        <taxon>Diptera</taxon>
        <taxon>Brachycera</taxon>
        <taxon>Muscomorpha</taxon>
        <taxon>Oestroidea</taxon>
        <taxon>Sarcophagidae</taxon>
        <taxon>Sarcophaga</taxon>
        <taxon>Neobellieria</taxon>
    </lineage>
</organism>
<sequence length="7" mass="930">TNDFMRF</sequence>
<feature type="peptide" id="PRO_0000371772" description="FMRFamide-13">
    <location>
        <begin position="1"/>
        <end position="7"/>
    </location>
</feature>
<feature type="modified residue" description="Phenylalanine amide" evidence="2">
    <location>
        <position position="7"/>
    </location>
</feature>
<protein>
    <recommendedName>
        <fullName>FMRFamide-13</fullName>
    </recommendedName>
    <alternativeName>
        <fullName evidence="3">SabFMRFamide-13</fullName>
    </alternativeName>
</protein>
<reference evidence="4" key="1">
    <citation type="journal article" date="2009" name="Gen. Comp. Endocrinol.">
        <title>Extended FMRFamides in dipteran insects: conservative expression in the neuroendocrine system is accompanied by rapid sequence evolution.</title>
        <authorList>
            <person name="Rahman M.M."/>
            <person name="Fromm B."/>
            <person name="Neupert S."/>
            <person name="Kreusch S."/>
            <person name="Predel R."/>
        </authorList>
    </citation>
    <scope>PROTEIN SEQUENCE</scope>
    <scope>MASS SPECTROMETRY</scope>
    <scope>AMIDATION AT PHE-7</scope>
    <source>
        <tissue evidence="2">Dorsal ganglionic sheath</tissue>
    </source>
</reference>